<sequence length="243" mass="26766">MTYSIRIADLPLTERPRERLLSLGAQSLSNAELLAILLATGQGKGKLSAVGLGQHILKELSQHKRDPLDVLRDMSPQELMNIPGIGPAKATTILAAIELGKRAFQLRPMEKVEINDPVSAVAALSHDLMWQNQERFAIVLLNVKNQIIGTKLISIGTATETLVHPREIFREVLKQGATKLIIGHNHPSGNVAPSQEDIDLTEQLLKAATFLNFPLLDHLILGNGNHQSLRTVTDLWIRYPQEG</sequence>
<keyword id="KW-0378">Hydrolase</keyword>
<keyword id="KW-0479">Metal-binding</keyword>
<keyword id="KW-0482">Metalloprotease</keyword>
<keyword id="KW-0645">Protease</keyword>
<keyword id="KW-1185">Reference proteome</keyword>
<keyword id="KW-0862">Zinc</keyword>
<name>Y2073_GLOC7</name>
<accession>B7KF44</accession>
<comment type="similarity">
    <text evidence="2">Belongs to the UPF0758 family.</text>
</comment>
<proteinExistence type="inferred from homology"/>
<dbReference type="EMBL" id="CP001291">
    <property type="protein sequence ID" value="ACK70500.1"/>
    <property type="molecule type" value="Genomic_DNA"/>
</dbReference>
<dbReference type="RefSeq" id="WP_015954106.1">
    <property type="nucleotide sequence ID" value="NC_011729.1"/>
</dbReference>
<dbReference type="SMR" id="B7KF44"/>
<dbReference type="STRING" id="65393.PCC7424_2073"/>
<dbReference type="KEGG" id="cyc:PCC7424_2073"/>
<dbReference type="eggNOG" id="COG2003">
    <property type="taxonomic scope" value="Bacteria"/>
</dbReference>
<dbReference type="HOGENOM" id="CLU_073529_0_2_3"/>
<dbReference type="OrthoDB" id="9804482at2"/>
<dbReference type="Proteomes" id="UP000002384">
    <property type="component" value="Chromosome"/>
</dbReference>
<dbReference type="GO" id="GO:0046872">
    <property type="term" value="F:metal ion binding"/>
    <property type="evidence" value="ECO:0007669"/>
    <property type="project" value="UniProtKB-KW"/>
</dbReference>
<dbReference type="GO" id="GO:0008237">
    <property type="term" value="F:metallopeptidase activity"/>
    <property type="evidence" value="ECO:0007669"/>
    <property type="project" value="UniProtKB-KW"/>
</dbReference>
<dbReference type="GO" id="GO:0006508">
    <property type="term" value="P:proteolysis"/>
    <property type="evidence" value="ECO:0007669"/>
    <property type="project" value="UniProtKB-KW"/>
</dbReference>
<dbReference type="CDD" id="cd08071">
    <property type="entry name" value="MPN_DUF2466"/>
    <property type="match status" value="1"/>
</dbReference>
<dbReference type="Gene3D" id="3.40.140.10">
    <property type="entry name" value="Cytidine Deaminase, domain 2"/>
    <property type="match status" value="1"/>
</dbReference>
<dbReference type="InterPro" id="IPR037518">
    <property type="entry name" value="MPN"/>
</dbReference>
<dbReference type="InterPro" id="IPR025657">
    <property type="entry name" value="RadC_JAB"/>
</dbReference>
<dbReference type="InterPro" id="IPR010994">
    <property type="entry name" value="RuvA_2-like"/>
</dbReference>
<dbReference type="InterPro" id="IPR001405">
    <property type="entry name" value="UPF0758"/>
</dbReference>
<dbReference type="InterPro" id="IPR020891">
    <property type="entry name" value="UPF0758_CS"/>
</dbReference>
<dbReference type="InterPro" id="IPR046778">
    <property type="entry name" value="UPF0758_N"/>
</dbReference>
<dbReference type="NCBIfam" id="NF000642">
    <property type="entry name" value="PRK00024.1"/>
    <property type="match status" value="1"/>
</dbReference>
<dbReference type="NCBIfam" id="TIGR00608">
    <property type="entry name" value="radc"/>
    <property type="match status" value="1"/>
</dbReference>
<dbReference type="PANTHER" id="PTHR30471">
    <property type="entry name" value="DNA REPAIR PROTEIN RADC"/>
    <property type="match status" value="1"/>
</dbReference>
<dbReference type="PANTHER" id="PTHR30471:SF3">
    <property type="entry name" value="UPF0758 PROTEIN YEES-RELATED"/>
    <property type="match status" value="1"/>
</dbReference>
<dbReference type="Pfam" id="PF04002">
    <property type="entry name" value="RadC"/>
    <property type="match status" value="1"/>
</dbReference>
<dbReference type="Pfam" id="PF20582">
    <property type="entry name" value="UPF0758_N"/>
    <property type="match status" value="1"/>
</dbReference>
<dbReference type="SUPFAM" id="SSF47781">
    <property type="entry name" value="RuvA domain 2-like"/>
    <property type="match status" value="1"/>
</dbReference>
<dbReference type="PROSITE" id="PS50249">
    <property type="entry name" value="MPN"/>
    <property type="match status" value="1"/>
</dbReference>
<dbReference type="PROSITE" id="PS01302">
    <property type="entry name" value="UPF0758"/>
    <property type="match status" value="1"/>
</dbReference>
<feature type="chain" id="PRO_1000116353" description="UPF0758 protein PCC7424_2073">
    <location>
        <begin position="1"/>
        <end position="243"/>
    </location>
</feature>
<feature type="domain" description="MPN" evidence="1">
    <location>
        <begin position="112"/>
        <end position="235"/>
    </location>
</feature>
<feature type="short sequence motif" description="JAMM motif" evidence="1">
    <location>
        <begin position="184"/>
        <end position="197"/>
    </location>
</feature>
<feature type="binding site" evidence="1">
    <location>
        <position position="184"/>
    </location>
    <ligand>
        <name>Zn(2+)</name>
        <dbReference type="ChEBI" id="CHEBI:29105"/>
        <note>catalytic</note>
    </ligand>
</feature>
<feature type="binding site" evidence="1">
    <location>
        <position position="186"/>
    </location>
    <ligand>
        <name>Zn(2+)</name>
        <dbReference type="ChEBI" id="CHEBI:29105"/>
        <note>catalytic</note>
    </ligand>
</feature>
<feature type="binding site" evidence="1">
    <location>
        <position position="197"/>
    </location>
    <ligand>
        <name>Zn(2+)</name>
        <dbReference type="ChEBI" id="CHEBI:29105"/>
        <note>catalytic</note>
    </ligand>
</feature>
<protein>
    <recommendedName>
        <fullName>UPF0758 protein PCC7424_2073</fullName>
    </recommendedName>
</protein>
<reference key="1">
    <citation type="journal article" date="2011" name="MBio">
        <title>Novel metabolic attributes of the genus Cyanothece, comprising a group of unicellular nitrogen-fixing Cyanobacteria.</title>
        <authorList>
            <person name="Bandyopadhyay A."/>
            <person name="Elvitigala T."/>
            <person name="Welsh E."/>
            <person name="Stockel J."/>
            <person name="Liberton M."/>
            <person name="Min H."/>
            <person name="Sherman L.A."/>
            <person name="Pakrasi H.B."/>
        </authorList>
    </citation>
    <scope>NUCLEOTIDE SEQUENCE [LARGE SCALE GENOMIC DNA]</scope>
    <source>
        <strain>PCC 7424</strain>
    </source>
</reference>
<gene>
    <name type="ordered locus">PCC7424_2073</name>
</gene>
<evidence type="ECO:0000255" key="1">
    <source>
        <dbReference type="PROSITE-ProRule" id="PRU01182"/>
    </source>
</evidence>
<evidence type="ECO:0000305" key="2"/>
<organism>
    <name type="scientific">Gloeothece citriformis (strain PCC 7424)</name>
    <name type="common">Cyanothece sp. (strain PCC 7424)</name>
    <dbReference type="NCBI Taxonomy" id="65393"/>
    <lineage>
        <taxon>Bacteria</taxon>
        <taxon>Bacillati</taxon>
        <taxon>Cyanobacteriota</taxon>
        <taxon>Cyanophyceae</taxon>
        <taxon>Oscillatoriophycideae</taxon>
        <taxon>Chroococcales</taxon>
        <taxon>Aphanothecaceae</taxon>
        <taxon>Gloeothece</taxon>
        <taxon>Gloeothece citriformis</taxon>
    </lineage>
</organism>